<sequence>MSMSTSTEVIAHHWAFAIFLIVAIGLCCLMLVGGWFLGGRARARSKNVPFESGIDSVGSARLRLSAKFYLVAMFFVIFDVEALYLFAWSTSIRESGWVGFVEAAIFIFVLLAGLVYLVRIGALDWTPARSRRERMNPETNSIANRQR</sequence>
<organism>
    <name type="scientific">Shigella sonnei (strain Ss046)</name>
    <dbReference type="NCBI Taxonomy" id="300269"/>
    <lineage>
        <taxon>Bacteria</taxon>
        <taxon>Pseudomonadati</taxon>
        <taxon>Pseudomonadota</taxon>
        <taxon>Gammaproteobacteria</taxon>
        <taxon>Enterobacterales</taxon>
        <taxon>Enterobacteriaceae</taxon>
        <taxon>Shigella</taxon>
    </lineage>
</organism>
<comment type="function">
    <text evidence="1">NDH-1 shuttles electrons from NADH, via FMN and iron-sulfur (Fe-S) centers, to quinones in the respiratory chain. The immediate electron acceptor for the enzyme in this species is believed to be ubiquinone. Couples the redox reaction to proton translocation (for every two electrons transferred, four hydrogen ions are translocated across the cytoplasmic membrane), and thus conserves the redox energy in a proton gradient.</text>
</comment>
<comment type="catalytic activity">
    <reaction evidence="1">
        <text>a quinone + NADH + 5 H(+)(in) = a quinol + NAD(+) + 4 H(+)(out)</text>
        <dbReference type="Rhea" id="RHEA:57888"/>
        <dbReference type="ChEBI" id="CHEBI:15378"/>
        <dbReference type="ChEBI" id="CHEBI:24646"/>
        <dbReference type="ChEBI" id="CHEBI:57540"/>
        <dbReference type="ChEBI" id="CHEBI:57945"/>
        <dbReference type="ChEBI" id="CHEBI:132124"/>
    </reaction>
</comment>
<comment type="subunit">
    <text evidence="1">NDH-1 is composed of 13 different subunits. Subunits NuoA, H, J, K, L, M, N constitute the membrane sector of the complex.</text>
</comment>
<comment type="subcellular location">
    <subcellularLocation>
        <location evidence="1">Cell inner membrane</location>
        <topology evidence="1">Multi-pass membrane protein</topology>
    </subcellularLocation>
</comment>
<comment type="similarity">
    <text evidence="1">Belongs to the complex I subunit 3 family.</text>
</comment>
<protein>
    <recommendedName>
        <fullName evidence="1">NADH-quinone oxidoreductase subunit A</fullName>
        <ecNumber evidence="1">7.1.1.-</ecNumber>
    </recommendedName>
    <alternativeName>
        <fullName evidence="1">NADH dehydrogenase I subunit A</fullName>
    </alternativeName>
    <alternativeName>
        <fullName evidence="1">NDH-1 subunit A</fullName>
    </alternativeName>
    <alternativeName>
        <fullName evidence="1">NUO1</fullName>
    </alternativeName>
</protein>
<reference key="1">
    <citation type="journal article" date="2005" name="Nucleic Acids Res.">
        <title>Genome dynamics and diversity of Shigella species, the etiologic agents of bacillary dysentery.</title>
        <authorList>
            <person name="Yang F."/>
            <person name="Yang J."/>
            <person name="Zhang X."/>
            <person name="Chen L."/>
            <person name="Jiang Y."/>
            <person name="Yan Y."/>
            <person name="Tang X."/>
            <person name="Wang J."/>
            <person name="Xiong Z."/>
            <person name="Dong J."/>
            <person name="Xue Y."/>
            <person name="Zhu Y."/>
            <person name="Xu X."/>
            <person name="Sun L."/>
            <person name="Chen S."/>
            <person name="Nie H."/>
            <person name="Peng J."/>
            <person name="Xu J."/>
            <person name="Wang Y."/>
            <person name="Yuan Z."/>
            <person name="Wen Y."/>
            <person name="Yao Z."/>
            <person name="Shen Y."/>
            <person name="Qiang B."/>
            <person name="Hou Y."/>
            <person name="Yu J."/>
            <person name="Jin Q."/>
        </authorList>
    </citation>
    <scope>NUCLEOTIDE SEQUENCE [LARGE SCALE GENOMIC DNA]</scope>
    <source>
        <strain>Ss046</strain>
    </source>
</reference>
<name>NUOA_SHISS</name>
<dbReference type="EC" id="7.1.1.-" evidence="1"/>
<dbReference type="EMBL" id="CP000038">
    <property type="protein sequence ID" value="AAZ88990.1"/>
    <property type="molecule type" value="Genomic_DNA"/>
</dbReference>
<dbReference type="RefSeq" id="WP_000062997.1">
    <property type="nucleotide sequence ID" value="NC_007384.1"/>
</dbReference>
<dbReference type="SMR" id="Q3YZS2"/>
<dbReference type="GeneID" id="93774886"/>
<dbReference type="KEGG" id="ssn:SSON_2345"/>
<dbReference type="HOGENOM" id="CLU_119549_2_0_6"/>
<dbReference type="Proteomes" id="UP000002529">
    <property type="component" value="Chromosome"/>
</dbReference>
<dbReference type="GO" id="GO:0030964">
    <property type="term" value="C:NADH dehydrogenase complex"/>
    <property type="evidence" value="ECO:0007669"/>
    <property type="project" value="TreeGrafter"/>
</dbReference>
<dbReference type="GO" id="GO:0005886">
    <property type="term" value="C:plasma membrane"/>
    <property type="evidence" value="ECO:0007669"/>
    <property type="project" value="UniProtKB-SubCell"/>
</dbReference>
<dbReference type="GO" id="GO:0008137">
    <property type="term" value="F:NADH dehydrogenase (ubiquinone) activity"/>
    <property type="evidence" value="ECO:0007669"/>
    <property type="project" value="InterPro"/>
</dbReference>
<dbReference type="GO" id="GO:0050136">
    <property type="term" value="F:NADH:ubiquinone reductase (non-electrogenic) activity"/>
    <property type="evidence" value="ECO:0007669"/>
    <property type="project" value="UniProtKB-UniRule"/>
</dbReference>
<dbReference type="GO" id="GO:0048038">
    <property type="term" value="F:quinone binding"/>
    <property type="evidence" value="ECO:0007669"/>
    <property type="project" value="UniProtKB-KW"/>
</dbReference>
<dbReference type="FunFam" id="1.20.58.1610:FF:000003">
    <property type="entry name" value="NADH-quinone oxidoreductase subunit A"/>
    <property type="match status" value="1"/>
</dbReference>
<dbReference type="Gene3D" id="1.20.58.1610">
    <property type="entry name" value="NADH:ubiquinone/plastoquinone oxidoreductase, chain 3"/>
    <property type="match status" value="1"/>
</dbReference>
<dbReference type="HAMAP" id="MF_01394">
    <property type="entry name" value="NDH1_NuoA"/>
    <property type="match status" value="1"/>
</dbReference>
<dbReference type="InterPro" id="IPR023043">
    <property type="entry name" value="NAD(P)H_OxRDtase_bac/plastid"/>
</dbReference>
<dbReference type="InterPro" id="IPR000440">
    <property type="entry name" value="NADH_UbQ/plastoQ_OxRdtase_su3"/>
</dbReference>
<dbReference type="InterPro" id="IPR038430">
    <property type="entry name" value="NDAH_ubi_oxred_su3_sf"/>
</dbReference>
<dbReference type="PANTHER" id="PTHR11058:SF21">
    <property type="entry name" value="NADH-QUINONE OXIDOREDUCTASE SUBUNIT A"/>
    <property type="match status" value="1"/>
</dbReference>
<dbReference type="PANTHER" id="PTHR11058">
    <property type="entry name" value="NADH-UBIQUINONE OXIDOREDUCTASE CHAIN 3"/>
    <property type="match status" value="1"/>
</dbReference>
<dbReference type="Pfam" id="PF00507">
    <property type="entry name" value="Oxidored_q4"/>
    <property type="match status" value="1"/>
</dbReference>
<accession>Q3YZS2</accession>
<gene>
    <name evidence="1" type="primary">nuoA</name>
    <name type="ordered locus">SSON_2345</name>
</gene>
<keyword id="KW-0997">Cell inner membrane</keyword>
<keyword id="KW-1003">Cell membrane</keyword>
<keyword id="KW-0472">Membrane</keyword>
<keyword id="KW-0520">NAD</keyword>
<keyword id="KW-0874">Quinone</keyword>
<keyword id="KW-1185">Reference proteome</keyword>
<keyword id="KW-1278">Translocase</keyword>
<keyword id="KW-0812">Transmembrane</keyword>
<keyword id="KW-1133">Transmembrane helix</keyword>
<keyword id="KW-0813">Transport</keyword>
<keyword id="KW-0830">Ubiquinone</keyword>
<evidence type="ECO:0000255" key="1">
    <source>
        <dbReference type="HAMAP-Rule" id="MF_01394"/>
    </source>
</evidence>
<proteinExistence type="inferred from homology"/>
<feature type="chain" id="PRO_0000362782" description="NADH-quinone oxidoreductase subunit A">
    <location>
        <begin position="1"/>
        <end position="147"/>
    </location>
</feature>
<feature type="transmembrane region" description="Helical" evidence="1">
    <location>
        <begin position="16"/>
        <end position="36"/>
    </location>
</feature>
<feature type="transmembrane region" description="Helical" evidence="1">
    <location>
        <begin position="68"/>
        <end position="88"/>
    </location>
</feature>
<feature type="transmembrane region" description="Helical" evidence="1">
    <location>
        <begin position="98"/>
        <end position="118"/>
    </location>
</feature>